<proteinExistence type="inferred from homology"/>
<dbReference type="EC" id="6.1.1.14" evidence="1"/>
<dbReference type="EMBL" id="AM421808">
    <property type="protein sequence ID" value="CAM11064.1"/>
    <property type="molecule type" value="Genomic_DNA"/>
</dbReference>
<dbReference type="RefSeq" id="WP_002256216.1">
    <property type="nucleotide sequence ID" value="NC_008767.1"/>
</dbReference>
<dbReference type="SMR" id="A1KW08"/>
<dbReference type="KEGG" id="nmc:NMC1903"/>
<dbReference type="HOGENOM" id="CLU_007220_2_2_4"/>
<dbReference type="Proteomes" id="UP000002286">
    <property type="component" value="Chromosome"/>
</dbReference>
<dbReference type="GO" id="GO:0005829">
    <property type="term" value="C:cytosol"/>
    <property type="evidence" value="ECO:0007669"/>
    <property type="project" value="TreeGrafter"/>
</dbReference>
<dbReference type="GO" id="GO:0004814">
    <property type="term" value="F:arginine-tRNA ligase activity"/>
    <property type="evidence" value="ECO:0007669"/>
    <property type="project" value="InterPro"/>
</dbReference>
<dbReference type="GO" id="GO:0005524">
    <property type="term" value="F:ATP binding"/>
    <property type="evidence" value="ECO:0007669"/>
    <property type="project" value="UniProtKB-UniRule"/>
</dbReference>
<dbReference type="GO" id="GO:0004820">
    <property type="term" value="F:glycine-tRNA ligase activity"/>
    <property type="evidence" value="ECO:0007669"/>
    <property type="project" value="UniProtKB-UniRule"/>
</dbReference>
<dbReference type="GO" id="GO:0006420">
    <property type="term" value="P:arginyl-tRNA aminoacylation"/>
    <property type="evidence" value="ECO:0007669"/>
    <property type="project" value="InterPro"/>
</dbReference>
<dbReference type="GO" id="GO:0006426">
    <property type="term" value="P:glycyl-tRNA aminoacylation"/>
    <property type="evidence" value="ECO:0007669"/>
    <property type="project" value="UniProtKB-UniRule"/>
</dbReference>
<dbReference type="HAMAP" id="MF_00255">
    <property type="entry name" value="Gly_tRNA_synth_beta"/>
    <property type="match status" value="1"/>
</dbReference>
<dbReference type="InterPro" id="IPR008909">
    <property type="entry name" value="DALR_anticod-bd"/>
</dbReference>
<dbReference type="InterPro" id="IPR015944">
    <property type="entry name" value="Gly-tRNA-synth_bsu"/>
</dbReference>
<dbReference type="InterPro" id="IPR006194">
    <property type="entry name" value="Gly-tRNA-synth_heterodimer"/>
</dbReference>
<dbReference type="NCBIfam" id="TIGR00211">
    <property type="entry name" value="glyS"/>
    <property type="match status" value="1"/>
</dbReference>
<dbReference type="PANTHER" id="PTHR30075:SF2">
    <property type="entry name" value="GLYCINE--TRNA LIGASE, CHLOROPLASTIC_MITOCHONDRIAL 2"/>
    <property type="match status" value="1"/>
</dbReference>
<dbReference type="PANTHER" id="PTHR30075">
    <property type="entry name" value="GLYCYL-TRNA SYNTHETASE"/>
    <property type="match status" value="1"/>
</dbReference>
<dbReference type="Pfam" id="PF05746">
    <property type="entry name" value="DALR_1"/>
    <property type="match status" value="1"/>
</dbReference>
<dbReference type="Pfam" id="PF02092">
    <property type="entry name" value="tRNA_synt_2f"/>
    <property type="match status" value="1"/>
</dbReference>
<dbReference type="PRINTS" id="PR01045">
    <property type="entry name" value="TRNASYNTHGB"/>
</dbReference>
<dbReference type="SUPFAM" id="SSF109604">
    <property type="entry name" value="HD-domain/PDEase-like"/>
    <property type="match status" value="1"/>
</dbReference>
<dbReference type="PROSITE" id="PS50861">
    <property type="entry name" value="AA_TRNA_LIGASE_II_GLYAB"/>
    <property type="match status" value="1"/>
</dbReference>
<accession>A1KW08</accession>
<name>SYGB_NEIMF</name>
<gene>
    <name evidence="1" type="primary">glyS</name>
    <name type="ordered locus">NMC1903</name>
</gene>
<keyword id="KW-0030">Aminoacyl-tRNA synthetase</keyword>
<keyword id="KW-0067">ATP-binding</keyword>
<keyword id="KW-0963">Cytoplasm</keyword>
<keyword id="KW-0436">Ligase</keyword>
<keyword id="KW-0547">Nucleotide-binding</keyword>
<keyword id="KW-0648">Protein biosynthesis</keyword>
<sequence>MTTQTLLIELLTEELPPKALNNLGNHFAAAVAEGLEKAQLVDGAAEFTAYASPRRLAVQVKNVKAVQADQKIVKKGPAVANAVKDGAPTKALEGFARGAGAKIEDLTIVHDGKQDVYAYEYVQTGKPLGGLLEDIINAAVKKLPIPKVMRWGSSTFTFVRPVHGLIVLHGGDIVNVSVLGLQSSNQTLGHRFLSNGEITIENADSYAAQMREQGKVVASFAERKAAIQTALEGQARRLNATVAADEALLDEVTALVEYPVVLEAGFEEHFLAVPQECLILTMQQNQKYFPLLDQNGKLMNRFLLVSNLQTEDPSHIIRGNERVLRARLSDAEFFYKQDQKATLESRLPKLANVVYHNKIGSQAERIERLQSIAAHIAKALDADAAAAERAARLAKADLVTEMVGEFPELQGTMGKYYARLDGETEEIAEAIEQHYQPRFAGDKLPESKIAAAVALADKLETLVGIWGIGLIPTGDKDPYALRRAALGILRMLMQYGLDVNELIQTAFDSFPKGLLNEKTPSETADFMQARLAVLLQNDYPQDIVAAVLAKQPRRLDDLTAKLQAVAAFKQLPEAAALAAANKRVQNLLKKADAELGEVNESLLQQDEEKALFAAAQGLQPKIAAAVAEGNFQTALSELASVKPQVDAFFDGVMVMAEDAAVKQNRLNLLNRLAEQMNAVADIALLGE</sequence>
<feature type="chain" id="PRO_1000101309" description="Glycine--tRNA ligase beta subunit">
    <location>
        <begin position="1"/>
        <end position="687"/>
    </location>
</feature>
<organism>
    <name type="scientific">Neisseria meningitidis serogroup C / serotype 2a (strain ATCC 700532 / DSM 15464 / FAM18)</name>
    <dbReference type="NCBI Taxonomy" id="272831"/>
    <lineage>
        <taxon>Bacteria</taxon>
        <taxon>Pseudomonadati</taxon>
        <taxon>Pseudomonadota</taxon>
        <taxon>Betaproteobacteria</taxon>
        <taxon>Neisseriales</taxon>
        <taxon>Neisseriaceae</taxon>
        <taxon>Neisseria</taxon>
    </lineage>
</organism>
<protein>
    <recommendedName>
        <fullName evidence="1">Glycine--tRNA ligase beta subunit</fullName>
        <ecNumber evidence="1">6.1.1.14</ecNumber>
    </recommendedName>
    <alternativeName>
        <fullName evidence="1">Glycyl-tRNA synthetase beta subunit</fullName>
        <shortName evidence="1">GlyRS</shortName>
    </alternativeName>
</protein>
<comment type="catalytic activity">
    <reaction evidence="1">
        <text>tRNA(Gly) + glycine + ATP = glycyl-tRNA(Gly) + AMP + diphosphate</text>
        <dbReference type="Rhea" id="RHEA:16013"/>
        <dbReference type="Rhea" id="RHEA-COMP:9664"/>
        <dbReference type="Rhea" id="RHEA-COMP:9683"/>
        <dbReference type="ChEBI" id="CHEBI:30616"/>
        <dbReference type="ChEBI" id="CHEBI:33019"/>
        <dbReference type="ChEBI" id="CHEBI:57305"/>
        <dbReference type="ChEBI" id="CHEBI:78442"/>
        <dbReference type="ChEBI" id="CHEBI:78522"/>
        <dbReference type="ChEBI" id="CHEBI:456215"/>
        <dbReference type="EC" id="6.1.1.14"/>
    </reaction>
</comment>
<comment type="subunit">
    <text evidence="1">Tetramer of two alpha and two beta subunits.</text>
</comment>
<comment type="subcellular location">
    <subcellularLocation>
        <location evidence="1">Cytoplasm</location>
    </subcellularLocation>
</comment>
<comment type="similarity">
    <text evidence="1">Belongs to the class-II aminoacyl-tRNA synthetase family.</text>
</comment>
<evidence type="ECO:0000255" key="1">
    <source>
        <dbReference type="HAMAP-Rule" id="MF_00255"/>
    </source>
</evidence>
<reference key="1">
    <citation type="journal article" date="2007" name="PLoS Genet.">
        <title>Meningococcal genetic variation mechanisms viewed through comparative analysis of serogroup C strain FAM18.</title>
        <authorList>
            <person name="Bentley S.D."/>
            <person name="Vernikos G.S."/>
            <person name="Snyder L.A.S."/>
            <person name="Churcher C."/>
            <person name="Arrowsmith C."/>
            <person name="Chillingworth T."/>
            <person name="Cronin A."/>
            <person name="Davis P.H."/>
            <person name="Holroyd N.E."/>
            <person name="Jagels K."/>
            <person name="Maddison M."/>
            <person name="Moule S."/>
            <person name="Rabbinowitsch E."/>
            <person name="Sharp S."/>
            <person name="Unwin L."/>
            <person name="Whitehead S."/>
            <person name="Quail M.A."/>
            <person name="Achtman M."/>
            <person name="Barrell B.G."/>
            <person name="Saunders N.J."/>
            <person name="Parkhill J."/>
        </authorList>
    </citation>
    <scope>NUCLEOTIDE SEQUENCE [LARGE SCALE GENOMIC DNA]</scope>
    <source>
        <strain>ATCC 700532 / DSM 15464 / FAM18</strain>
    </source>
</reference>